<dbReference type="EMBL" id="Y00114">
    <property type="protein sequence ID" value="CAA68297.1"/>
    <property type="molecule type" value="Genomic_RNA"/>
</dbReference>
<dbReference type="EMBL" id="D84095">
    <property type="protein sequence ID" value="BAA12217.1"/>
    <property type="molecule type" value="Genomic_RNA"/>
</dbReference>
<dbReference type="PIR" id="A27218">
    <property type="entry name" value="VGNZB3"/>
</dbReference>
<dbReference type="SMR" id="P09990"/>
<dbReference type="GlyCosmos" id="P09990">
    <property type="glycosylation" value="4 sites, No reported glycans"/>
</dbReference>
<dbReference type="Proteomes" id="UP000133413">
    <property type="component" value="Genome"/>
</dbReference>
<dbReference type="GO" id="GO:0020002">
    <property type="term" value="C:host cell plasma membrane"/>
    <property type="evidence" value="ECO:0007669"/>
    <property type="project" value="UniProtKB-SubCell"/>
</dbReference>
<dbReference type="GO" id="GO:0016020">
    <property type="term" value="C:membrane"/>
    <property type="evidence" value="ECO:0007669"/>
    <property type="project" value="UniProtKB-KW"/>
</dbReference>
<dbReference type="GO" id="GO:0019031">
    <property type="term" value="C:viral envelope"/>
    <property type="evidence" value="ECO:0007669"/>
    <property type="project" value="UniProtKB-KW"/>
</dbReference>
<dbReference type="GO" id="GO:0055036">
    <property type="term" value="C:virion membrane"/>
    <property type="evidence" value="ECO:0007669"/>
    <property type="project" value="UniProtKB-SubCell"/>
</dbReference>
<dbReference type="GO" id="GO:0019064">
    <property type="term" value="P:fusion of virus membrane with host plasma membrane"/>
    <property type="evidence" value="ECO:0007669"/>
    <property type="project" value="UniProtKB-KW"/>
</dbReference>
<dbReference type="GO" id="GO:0046718">
    <property type="term" value="P:symbiont entry into host cell"/>
    <property type="evidence" value="ECO:0007669"/>
    <property type="project" value="UniProtKB-KW"/>
</dbReference>
<dbReference type="Gene3D" id="1.10.287.2480">
    <property type="match status" value="2"/>
</dbReference>
<dbReference type="Gene3D" id="2.60.40.1690">
    <property type="entry name" value="Head and neck region of the ectodomain of NDV fusion glycoprotein"/>
    <property type="match status" value="1"/>
</dbReference>
<dbReference type="Gene3D" id="2.40.490.10">
    <property type="entry name" value="Newcastle disease virus like domain"/>
    <property type="match status" value="1"/>
</dbReference>
<dbReference type="Gene3D" id="1.10.287.770">
    <property type="entry name" value="YojJ-like"/>
    <property type="match status" value="1"/>
</dbReference>
<dbReference type="InterPro" id="IPR000776">
    <property type="entry name" value="Fusion_F0_Paramyxovir"/>
</dbReference>
<dbReference type="Pfam" id="PF00523">
    <property type="entry name" value="Fusion_gly"/>
    <property type="match status" value="1"/>
</dbReference>
<dbReference type="SUPFAM" id="SSF69922">
    <property type="entry name" value="Head and neck region of the ectodomain of NDV fusion glycoprotein"/>
    <property type="match status" value="1"/>
</dbReference>
<dbReference type="SUPFAM" id="SSF58069">
    <property type="entry name" value="Virus ectodomain"/>
    <property type="match status" value="1"/>
</dbReference>
<comment type="function">
    <text evidence="1">Class I viral fusion protein. Under the current model, the protein has at least 3 conformational states: pre-fusion native state, pre-hairpin intermediate state, and post-fusion hairpin state. During viral and plasma cell membrane fusion, the heptad repeat (HR) regions assume a trimer-of-hairpins structure, positioning the fusion peptide in close proximity to the C-terminal region of the ectodomain. The formation of this structure appears to drive apposition and subsequent fusion of viral and plasma cell membranes. Directs fusion of viral and cellular membranes leading to delivery of the nucleocapsid into the cytoplasm. This fusion is pH independent and occurs directly at the outer cell membrane. The trimer of F1-F2 (F protein) probably interacts with HN at the virion surface. Upon HN binding to its cellular receptor, the hydrophobic fusion peptide is unmasked and interacts with the cellular membrane, inducing the fusion between cell and virion membranes. Later in infection, F proteins expressed at the plasma membrane of infected cells could mediate fusion with adjacent cells to form syncytia, a cytopathic effect that could lead to tissue necrosis (By similarity).</text>
</comment>
<comment type="subunit">
    <text evidence="1">Homotrimer of disulfide-linked F1-F2.</text>
</comment>
<comment type="subcellular location">
    <subcellularLocation>
        <location evidence="1">Virion membrane</location>
        <topology evidence="1">Single-pass type I membrane protein</topology>
    </subcellularLocation>
    <subcellularLocation>
        <location evidence="1">Host cell membrane</location>
        <topology evidence="1">Single-pass membrane protein</topology>
    </subcellularLocation>
</comment>
<comment type="PTM">
    <text evidence="1">The inactive precursor F0 is glycosylated and proteolytically cleaved into F1 and F2 to be functionally active. The cleavage is mediated by cellular proteases during the transport and maturation of the polypeptide (By similarity).</text>
</comment>
<comment type="similarity">
    <text evidence="3">Belongs to the paramyxoviruses fusion glycoprotein family.</text>
</comment>
<proteinExistence type="inferred from homology"/>
<organismHost>
    <name type="scientific">Bos taurus</name>
    <name type="common">Bovine</name>
    <dbReference type="NCBI Taxonomy" id="9913"/>
</organismHost>
<sequence length="540" mass="60007">MIITNTIIIILIISPSFCQIDITKLQRVGVLVNNPKGMKISQNFETRYLILSLIPKIENSHSCGDQQINQYKKLLDRLIIPLYDGLKLQKDVIVVSHETNNNTNSRTKRFFGEIIGTIAIGIATSAQITAAVALVEAKQAKSDIEKLKEAIRDTNKAVQSIQSSVGNLIVAVKSVQDYVNNEIVPSITRLGCEAAGLKLGIALTQHYSELTNIFGDNIGTLKEKGIKLQGIASLYHTNITEIFTTSTVDQYDIYDLLFTESIKMRVIDVDLSDYSITLQVRLPLLTKISNTQIYKVDSISYNIQGKEWYIPLPNHIMTKGAFLGGADIKECIEAFSSYICPSDPGFTLNHEIENCLSGNITQCPKTIVTSDVVPRYAFVNGGLIANCITTTCTCNGVDNRINQSPDQGIKIITHKECQVIGINGMLFSTNREGTLATYTFDDIILNNSVALNPIDISMELNKAKLELEESKEWIKKSNQKLDSVGSWYQSSATITIIIVMIVVLFIINITIIVVIIRHHRIQGKNQNDKNSEPYVLTSRQ</sequence>
<accession>P09990</accession>
<keyword id="KW-0165">Cleavage on pair of basic residues</keyword>
<keyword id="KW-0175">Coiled coil</keyword>
<keyword id="KW-1015">Disulfide bond</keyword>
<keyword id="KW-1169">Fusion of virus membrane with host cell membrane</keyword>
<keyword id="KW-1168">Fusion of virus membrane with host membrane</keyword>
<keyword id="KW-0325">Glycoprotein</keyword>
<keyword id="KW-1032">Host cell membrane</keyword>
<keyword id="KW-1043">Host membrane</keyword>
<keyword id="KW-0472">Membrane</keyword>
<keyword id="KW-0732">Signal</keyword>
<keyword id="KW-0812">Transmembrane</keyword>
<keyword id="KW-1133">Transmembrane helix</keyword>
<keyword id="KW-0261">Viral envelope protein</keyword>
<keyword id="KW-1162">Viral penetration into host cytoplasm</keyword>
<keyword id="KW-0946">Virion</keyword>
<keyword id="KW-1160">Virus entry into host cell</keyword>
<organism>
    <name type="scientific">Bovine parainfluenza 3 virus</name>
    <name type="common">BPIV-3</name>
    <dbReference type="NCBI Taxonomy" id="3052729"/>
    <lineage>
        <taxon>Viruses</taxon>
        <taxon>Riboviria</taxon>
        <taxon>Orthornavirae</taxon>
        <taxon>Negarnaviricota</taxon>
        <taxon>Haploviricotina</taxon>
        <taxon>Monjiviricetes</taxon>
        <taxon>Mononegavirales</taxon>
        <taxon>Paramyxoviridae</taxon>
        <taxon>Feraresvirinae</taxon>
        <taxon>Respirovirus</taxon>
    </lineage>
</organism>
<reference key="1">
    <citation type="journal article" date="1987" name="Nucleic Acids Res.">
        <title>Nucleotide sequence of the bovine parainfluenza 3 virus genome: the genes of the F and HN glycoproteins.</title>
        <authorList>
            <person name="Suzu S."/>
            <person name="Sakai Y."/>
            <person name="Shioda T."/>
            <person name="Shibuta H."/>
        </authorList>
    </citation>
    <scope>NUCLEOTIDE SEQUENCE [GENOMIC RNA]</scope>
    <source>
        <strain>910N</strain>
    </source>
</reference>
<name>FUS_PI3B</name>
<feature type="signal peptide" evidence="2">
    <location>
        <begin position="1"/>
        <end position="18"/>
    </location>
</feature>
<feature type="chain" id="PRO_0000039342" description="Fusion glycoprotein F0">
    <location>
        <begin position="19"/>
        <end position="540"/>
    </location>
</feature>
<feature type="chain" id="PRO_0000039343" description="Fusion glycoprotein F2">
    <location>
        <begin position="19"/>
        <end position="109"/>
    </location>
</feature>
<feature type="chain" id="PRO_0000039344" description="Fusion glycoprotein F1">
    <location>
        <begin position="110"/>
        <end position="540"/>
    </location>
</feature>
<feature type="topological domain" description="Extracellular" evidence="1">
    <location>
        <begin position="19"/>
        <end position="495"/>
    </location>
</feature>
<feature type="transmembrane region" description="Helical" evidence="1">
    <location>
        <begin position="496"/>
        <end position="516"/>
    </location>
</feature>
<feature type="topological domain" description="Cytoplasmic" evidence="1">
    <location>
        <begin position="517"/>
        <end position="540"/>
    </location>
</feature>
<feature type="region of interest" description="Fusion peptide" evidence="1">
    <location>
        <begin position="110"/>
        <end position="134"/>
    </location>
</feature>
<feature type="coiled-coil region" evidence="2">
    <location>
        <begin position="135"/>
        <end position="163"/>
    </location>
</feature>
<feature type="coiled-coil region" evidence="2">
    <location>
        <begin position="459"/>
        <end position="484"/>
    </location>
</feature>
<feature type="site" description="Cleavage; by host" evidence="1">
    <location>
        <begin position="109"/>
        <end position="110"/>
    </location>
</feature>
<feature type="glycosylation site" description="N-linked (GlcNAc...) asparagine; by host" evidence="2">
    <location>
        <position position="101"/>
    </location>
</feature>
<feature type="glycosylation site" description="N-linked (GlcNAc...) asparagine; by host" evidence="2">
    <location>
        <position position="238"/>
    </location>
</feature>
<feature type="glycosylation site" description="N-linked (GlcNAc...) asparagine; by host" evidence="2">
    <location>
        <position position="359"/>
    </location>
</feature>
<feature type="glycosylation site" description="N-linked (GlcNAc...) asparagine; by host" evidence="2">
    <location>
        <position position="446"/>
    </location>
</feature>
<feature type="disulfide bond" description="Interchain (between F2 and F1 chains)" evidence="1">
    <location>
        <begin position="63"/>
        <end position="192"/>
    </location>
</feature>
<feature type="disulfide bond" evidence="1">
    <location>
        <begin position="331"/>
        <end position="340"/>
    </location>
</feature>
<feature type="disulfide bond" evidence="1">
    <location>
        <begin position="355"/>
        <end position="363"/>
    </location>
</feature>
<feature type="disulfide bond" evidence="1">
    <location>
        <begin position="387"/>
        <end position="392"/>
    </location>
</feature>
<feature type="disulfide bond" evidence="1">
    <location>
        <begin position="394"/>
        <end position="417"/>
    </location>
</feature>
<evidence type="ECO:0000250" key="1"/>
<evidence type="ECO:0000255" key="2"/>
<evidence type="ECO:0000305" key="3"/>
<gene>
    <name type="primary">F</name>
</gene>
<protein>
    <recommendedName>
        <fullName>Fusion glycoprotein F0</fullName>
    </recommendedName>
    <component>
        <recommendedName>
            <fullName>Fusion glycoprotein F2</fullName>
        </recommendedName>
    </component>
    <component>
        <recommendedName>
            <fullName>Fusion glycoprotein F1</fullName>
        </recommendedName>
    </component>
</protein>